<protein>
    <recommendedName>
        <fullName evidence="7">Palmitoyltransferase ZDHHC8</fullName>
        <ecNumber evidence="3">2.3.1.225</ecNumber>
    </recommendedName>
    <alternativeName>
        <fullName evidence="3">Zinc finger DHHC domain-containing protein 8</fullName>
        <shortName evidence="3">DHHC-8</shortName>
    </alternativeName>
</protein>
<accession>Q2THW8</accession>
<gene>
    <name evidence="3" type="primary">ZDHHC8</name>
</gene>
<sequence>MPRSPGTRLKPAKYIPVATAAALLVGSSTLFFVFTCPWLTRAVSPAVPVYNGIIFLFVLANFSMATFMDPGVFPRADEDEDKEDDFRAPLYKNVDVRGIQVRMKWCATCHFYRPPRCSHCSVCDNCVEDFDHHCPWVNNCIGRRNYRYFFLFLLSLSAHMVGVVAFGLVYVLNHAEGLGAAHTTITMAVMCVAGLFFIPVIGLTGFHVVLVTRGRTTNEHVTGKFRGGVNPFTRGCYGNVEHVLCSPLAPRYVVEPPRLPLAARLKPPFLRPELLERAAPLKVKLSDNGLKAGLGRSKSKGSLDRLDEKPLDLGPPLPPKAEAGTFGGDLQTPRPSSAESALSAQRTSPPTPAMYKFRPAFPSGPKAPFCGPGEQVPGPDSLTLGEDSIHSLDFASEPSLDLPDYTPGGLHAAYPPSPPLSAADTFSGALRSLSLKAAGRRGGDHVALQPLRSEGGPPTPHRGIFAPHALPNRNGSLSYDSLLNPGSPGGHTCPAHPSAGVASYRSPYLHPGAVGEPPRPPPRSFSPVLGPRPREPSPVRYDNLSRTIMASIQERKDREERERLLRSQADSLFGDSGVYDAPSSYSLQQASALADGARGPALRYGSRDDLVAGPGFGGARNPALQTSVSSLSSAVSRAPRTSSSSLQADLANNNAPGPRPGSGSHRSPVRQGPPSPPSTPRSPSYAGPKAVAFIHTDLPESPPSLAVQRDHPQLKTPPSKLNGQSPGLARLGPAAGPPGPSASPARHTLVKKVSGVGGTTYEISV</sequence>
<reference key="1">
    <citation type="submission" date="2004-12" db="EMBL/GenBank/DDBJ databases">
        <title>A superfamily of membrane-associated DHHC type zinc finger proteins.</title>
        <authorList>
            <person name="Chen Y."/>
            <person name="Huang C.-H."/>
        </authorList>
    </citation>
    <scope>NUCLEOTIDE SEQUENCE [MRNA]</scope>
</reference>
<proteinExistence type="evidence at transcript level"/>
<evidence type="ECO:0000250" key="1">
    <source>
        <dbReference type="UniProtKB" id="Q5Y5T5"/>
    </source>
</evidence>
<evidence type="ECO:0000250" key="2">
    <source>
        <dbReference type="UniProtKB" id="Q8IUH5"/>
    </source>
</evidence>
<evidence type="ECO:0000250" key="3">
    <source>
        <dbReference type="UniProtKB" id="Q9ULC8"/>
    </source>
</evidence>
<evidence type="ECO:0000255" key="4"/>
<evidence type="ECO:0000255" key="5">
    <source>
        <dbReference type="PROSITE-ProRule" id="PRU00067"/>
    </source>
</evidence>
<evidence type="ECO:0000256" key="6">
    <source>
        <dbReference type="SAM" id="MobiDB-lite"/>
    </source>
</evidence>
<evidence type="ECO:0000305" key="7"/>
<organism>
    <name type="scientific">Canis lupus familiaris</name>
    <name type="common">Dog</name>
    <name type="synonym">Canis familiaris</name>
    <dbReference type="NCBI Taxonomy" id="9615"/>
    <lineage>
        <taxon>Eukaryota</taxon>
        <taxon>Metazoa</taxon>
        <taxon>Chordata</taxon>
        <taxon>Craniata</taxon>
        <taxon>Vertebrata</taxon>
        <taxon>Euteleostomi</taxon>
        <taxon>Mammalia</taxon>
        <taxon>Eutheria</taxon>
        <taxon>Laurasiatheria</taxon>
        <taxon>Carnivora</taxon>
        <taxon>Caniformia</taxon>
        <taxon>Canidae</taxon>
        <taxon>Canis</taxon>
    </lineage>
</organism>
<feature type="chain" id="PRO_0000269229" description="Palmitoyltransferase ZDHHC8">
    <location>
        <begin position="1"/>
        <end position="765"/>
    </location>
</feature>
<feature type="topological domain" description="Cytoplasmic" evidence="4">
    <location>
        <begin position="1"/>
        <end position="13"/>
    </location>
</feature>
<feature type="transmembrane region" description="Helical" evidence="4">
    <location>
        <begin position="14"/>
        <end position="34"/>
    </location>
</feature>
<feature type="topological domain" description="Lumenal" evidence="4">
    <location>
        <begin position="35"/>
        <end position="52"/>
    </location>
</feature>
<feature type="transmembrane region" description="Helical" evidence="4">
    <location>
        <begin position="53"/>
        <end position="73"/>
    </location>
</feature>
<feature type="topological domain" description="Cytoplasmic" evidence="4">
    <location>
        <begin position="74"/>
        <end position="148"/>
    </location>
</feature>
<feature type="transmembrane region" description="Helical" evidence="4">
    <location>
        <begin position="149"/>
        <end position="169"/>
    </location>
</feature>
<feature type="topological domain" description="Lumenal" evidence="4">
    <location>
        <begin position="170"/>
        <end position="190"/>
    </location>
</feature>
<feature type="transmembrane region" description="Helical" evidence="4">
    <location>
        <begin position="191"/>
        <end position="211"/>
    </location>
</feature>
<feature type="topological domain" description="Cytoplasmic" evidence="4">
    <location>
        <begin position="212"/>
        <end position="765"/>
    </location>
</feature>
<feature type="domain" description="DHHC" evidence="5">
    <location>
        <begin position="104"/>
        <end position="154"/>
    </location>
</feature>
<feature type="region of interest" description="Disordered" evidence="6">
    <location>
        <begin position="290"/>
        <end position="386"/>
    </location>
</feature>
<feature type="region of interest" description="Disordered" evidence="6">
    <location>
        <begin position="447"/>
        <end position="542"/>
    </location>
</feature>
<feature type="region of interest" description="Disordered" evidence="6">
    <location>
        <begin position="630"/>
        <end position="747"/>
    </location>
</feature>
<feature type="compositionally biased region" description="Basic and acidic residues" evidence="6">
    <location>
        <begin position="301"/>
        <end position="311"/>
    </location>
</feature>
<feature type="compositionally biased region" description="Polar residues" evidence="6">
    <location>
        <begin position="333"/>
        <end position="348"/>
    </location>
</feature>
<feature type="compositionally biased region" description="Polar residues" evidence="6">
    <location>
        <begin position="639"/>
        <end position="655"/>
    </location>
</feature>
<feature type="compositionally biased region" description="Pro residues" evidence="6">
    <location>
        <begin position="671"/>
        <end position="680"/>
    </location>
</feature>
<feature type="active site" description="S-palmitoyl cysteine intermediate" evidence="5">
    <location>
        <position position="134"/>
    </location>
</feature>
<feature type="modified residue" description="Phosphoserine" evidence="1">
    <location>
        <position position="337"/>
    </location>
</feature>
<feature type="modified residue" description="Omega-N-methylarginine" evidence="1">
    <location>
        <position position="441"/>
    </location>
</feature>
<feature type="modified residue" description="Phosphoserine" evidence="3">
    <location>
        <position position="606"/>
    </location>
</feature>
<feature type="modified residue" description="Phosphoserine" evidence="1">
    <location>
        <position position="627"/>
    </location>
</feature>
<feature type="modified residue" description="Phosphoserine" evidence="3">
    <location>
        <position position="675"/>
    </location>
</feature>
<feature type="modified residue" description="Phosphoserine" evidence="3">
    <location>
        <position position="682"/>
    </location>
</feature>
<feature type="modified residue" description="Phosphoserine" evidence="3">
    <location>
        <position position="725"/>
    </location>
</feature>
<feature type="modified residue" description="Phosphoserine" evidence="3">
    <location>
        <position position="743"/>
    </location>
</feature>
<dbReference type="EC" id="2.3.1.225" evidence="3"/>
<dbReference type="EMBL" id="AY871202">
    <property type="protein sequence ID" value="AAX68535.1"/>
    <property type="molecule type" value="mRNA"/>
</dbReference>
<dbReference type="RefSeq" id="NP_001104240.1">
    <property type="nucleotide sequence ID" value="NM_001110770.1"/>
</dbReference>
<dbReference type="SMR" id="Q2THW8"/>
<dbReference type="FunCoup" id="Q2THW8">
    <property type="interactions" value="96"/>
</dbReference>
<dbReference type="STRING" id="9615.ENSCAFP00000058886"/>
<dbReference type="PaxDb" id="9612-ENSCAFP00000038379"/>
<dbReference type="GeneID" id="486415"/>
<dbReference type="KEGG" id="cfa:486415"/>
<dbReference type="CTD" id="29801"/>
<dbReference type="eggNOG" id="KOG1311">
    <property type="taxonomic scope" value="Eukaryota"/>
</dbReference>
<dbReference type="InParanoid" id="Q2THW8"/>
<dbReference type="OrthoDB" id="4096362at2759"/>
<dbReference type="Proteomes" id="UP000002254">
    <property type="component" value="Unplaced"/>
</dbReference>
<dbReference type="Proteomes" id="UP000694429">
    <property type="component" value="Unplaced"/>
</dbReference>
<dbReference type="Proteomes" id="UP000694542">
    <property type="component" value="Unplaced"/>
</dbReference>
<dbReference type="Proteomes" id="UP000805418">
    <property type="component" value="Unplaced"/>
</dbReference>
<dbReference type="GO" id="GO:0005794">
    <property type="term" value="C:Golgi apparatus"/>
    <property type="evidence" value="ECO:0000318"/>
    <property type="project" value="GO_Central"/>
</dbReference>
<dbReference type="GO" id="GO:0000139">
    <property type="term" value="C:Golgi membrane"/>
    <property type="evidence" value="ECO:0007669"/>
    <property type="project" value="UniProtKB-SubCell"/>
</dbReference>
<dbReference type="GO" id="GO:0031966">
    <property type="term" value="C:mitochondrial membrane"/>
    <property type="evidence" value="ECO:0007669"/>
    <property type="project" value="UniProtKB-SubCell"/>
</dbReference>
<dbReference type="GO" id="GO:0016409">
    <property type="term" value="F:palmitoyltransferase activity"/>
    <property type="evidence" value="ECO:0000318"/>
    <property type="project" value="GO_Central"/>
</dbReference>
<dbReference type="GO" id="GO:0019706">
    <property type="term" value="F:protein-cysteine S-palmitoyltransferase activity"/>
    <property type="evidence" value="ECO:0007669"/>
    <property type="project" value="UniProtKB-EC"/>
</dbReference>
<dbReference type="GO" id="GO:0018230">
    <property type="term" value="P:peptidyl-L-cysteine S-palmitoylation"/>
    <property type="evidence" value="ECO:0000250"/>
    <property type="project" value="UniProtKB"/>
</dbReference>
<dbReference type="GO" id="GO:0010875">
    <property type="term" value="P:positive regulation of cholesterol efflux"/>
    <property type="evidence" value="ECO:0000250"/>
    <property type="project" value="UniProtKB"/>
</dbReference>
<dbReference type="InterPro" id="IPR001594">
    <property type="entry name" value="Palmitoyltrfase_DHHC"/>
</dbReference>
<dbReference type="PANTHER" id="PTHR12349">
    <property type="entry name" value="ANKYRIN REPEAT AND LEM DOMAIN-CONTAINING PROTEIN 2"/>
    <property type="match status" value="1"/>
</dbReference>
<dbReference type="PANTHER" id="PTHR12349:SF1">
    <property type="entry name" value="PALMITOYLTRANSFERASE ZDHHC8"/>
    <property type="match status" value="1"/>
</dbReference>
<dbReference type="Pfam" id="PF01529">
    <property type="entry name" value="DHHC"/>
    <property type="match status" value="1"/>
</dbReference>
<dbReference type="PROSITE" id="PS50216">
    <property type="entry name" value="DHHC"/>
    <property type="match status" value="1"/>
</dbReference>
<comment type="function">
    <text evidence="1 3">Palmitoyltransferase that catalyzes the addition of palmitate onto various protein substrates and therefore functions in several unrelated biological processes. Through the palmitoylation of ABCA1 regulates the localization of the transporter to the plasma membrane and thereby regulates its function in cholesterol and phospholipid efflux (By similarity). Could also pamitoylate the D(2) dopamine receptor DRD2 and regulate its stability and localization to the plasma membrane (By similarity). Could also play a role in glutamatergic transmission (By similarity).</text>
</comment>
<comment type="catalytic activity">
    <reaction evidence="3">
        <text>L-cysteinyl-[protein] + hexadecanoyl-CoA = S-hexadecanoyl-L-cysteinyl-[protein] + CoA</text>
        <dbReference type="Rhea" id="RHEA:36683"/>
        <dbReference type="Rhea" id="RHEA-COMP:10131"/>
        <dbReference type="Rhea" id="RHEA-COMP:11032"/>
        <dbReference type="ChEBI" id="CHEBI:29950"/>
        <dbReference type="ChEBI" id="CHEBI:57287"/>
        <dbReference type="ChEBI" id="CHEBI:57379"/>
        <dbReference type="ChEBI" id="CHEBI:74151"/>
        <dbReference type="EC" id="2.3.1.225"/>
    </reaction>
    <physiologicalReaction direction="left-to-right" evidence="3">
        <dbReference type="Rhea" id="RHEA:36684"/>
    </physiologicalReaction>
</comment>
<comment type="subcellular location">
    <subcellularLocation>
        <location evidence="3">Golgi apparatus membrane</location>
        <topology evidence="4">Multi-pass membrane protein</topology>
    </subcellularLocation>
    <subcellularLocation>
        <location evidence="1">Mitochondrion membrane</location>
        <topology evidence="4">Multi-pass membrane protein</topology>
    </subcellularLocation>
</comment>
<comment type="domain">
    <text evidence="2">The DHHC domain is required for palmitoyltransferase activity.</text>
</comment>
<comment type="similarity">
    <text evidence="7">Belongs to the DHHC palmitoyltransferase family. ERF2/ZDHHC9 subfamily.</text>
</comment>
<keyword id="KW-0012">Acyltransferase</keyword>
<keyword id="KW-0333">Golgi apparatus</keyword>
<keyword id="KW-0449">Lipoprotein</keyword>
<keyword id="KW-0472">Membrane</keyword>
<keyword id="KW-0488">Methylation</keyword>
<keyword id="KW-0496">Mitochondrion</keyword>
<keyword id="KW-0564">Palmitate</keyword>
<keyword id="KW-0597">Phosphoprotein</keyword>
<keyword id="KW-1185">Reference proteome</keyword>
<keyword id="KW-0808">Transferase</keyword>
<keyword id="KW-0812">Transmembrane</keyword>
<keyword id="KW-1133">Transmembrane helix</keyword>
<name>ZDHC8_CANLF</name>